<keyword id="KW-1185">Reference proteome</keyword>
<name>Y107B_ABVP</name>
<gene>
    <name type="ORF">ORF107b</name>
</gene>
<protein>
    <recommendedName>
        <fullName>Uncharacterized protein ORF107b</fullName>
    </recommendedName>
</protein>
<accession>A4ZUA3</accession>
<sequence>MPSGNVLVPEEMIKKAKQLSSFLPAEVKQQIKTIENMKRSFSLPAKINGDYVLIVGIVTDSPIRSTIAFDLDDLKIIMEVVLKALDRLGVNRNEFLAQFIQEGESSA</sequence>
<feature type="chain" id="PRO_0000384850" description="Uncharacterized protein ORF107b">
    <location>
        <begin position="1"/>
        <end position="107"/>
    </location>
</feature>
<organism>
    <name type="scientific">Acidianus bottle-shaped virus (isolate Italy/Pozzuoli)</name>
    <name type="common">ABV</name>
    <dbReference type="NCBI Taxonomy" id="654911"/>
    <lineage>
        <taxon>Viruses</taxon>
        <taxon>Viruses incertae sedis</taxon>
        <taxon>Ampullaviridae</taxon>
        <taxon>Bottigliavirus</taxon>
        <taxon>Bottigliavirus ABV</taxon>
    </lineage>
</organism>
<proteinExistence type="predicted"/>
<organismHost>
    <name type="scientific">Acidianus convivator</name>
    <dbReference type="NCBI Taxonomy" id="269667"/>
</organismHost>
<reference key="1">
    <citation type="journal article" date="2007" name="Virology">
        <title>Genome of the Acidianus bottle-shaped virus and insights into the replication and packaging mechanisms.</title>
        <authorList>
            <person name="Peng X."/>
            <person name="Basta T."/>
            <person name="Haring M."/>
            <person name="Garrett R.A."/>
            <person name="Prangishvili D."/>
        </authorList>
    </citation>
    <scope>NUCLEOTIDE SEQUENCE [GENOMIC DNA]</scope>
</reference>
<dbReference type="EMBL" id="EF432053">
    <property type="protein sequence ID" value="ABP73407.1"/>
    <property type="molecule type" value="Genomic_DNA"/>
</dbReference>
<dbReference type="RefSeq" id="YP_001210321.1">
    <property type="nucleotide sequence ID" value="NC_009452.1"/>
</dbReference>
<dbReference type="SMR" id="A4ZUA3"/>
<dbReference type="GeneID" id="5129823"/>
<dbReference type="KEGG" id="vg:5129823"/>
<dbReference type="Proteomes" id="UP000000513">
    <property type="component" value="Segment"/>
</dbReference>